<protein>
    <recommendedName>
        <fullName evidence="1">Small ribosomal subunit protein uS17</fullName>
    </recommendedName>
    <alternativeName>
        <fullName evidence="2">30S ribosomal protein S17</fullName>
    </alternativeName>
</protein>
<gene>
    <name evidence="1" type="primary">rpsQ</name>
    <name type="ordered locus">SG2269</name>
</gene>
<keyword id="KW-0687">Ribonucleoprotein</keyword>
<keyword id="KW-0689">Ribosomal protein</keyword>
<keyword id="KW-0694">RNA-binding</keyword>
<keyword id="KW-0699">rRNA-binding</keyword>
<accession>Q2NQN1</accession>
<name>RS17_SODGM</name>
<sequence>MSDKIRTLQGRVVSDKMEKSIVVAIERFVKHPIYGKFIKRTTKLHVHDENNDSNIGDIVEISECRPISKTKSWTLVRVVEKAIL</sequence>
<proteinExistence type="inferred from homology"/>
<feature type="chain" id="PRO_0000233567" description="Small ribosomal subunit protein uS17">
    <location>
        <begin position="1"/>
        <end position="84"/>
    </location>
</feature>
<organism>
    <name type="scientific">Sodalis glossinidius (strain morsitans)</name>
    <dbReference type="NCBI Taxonomy" id="343509"/>
    <lineage>
        <taxon>Bacteria</taxon>
        <taxon>Pseudomonadati</taxon>
        <taxon>Pseudomonadota</taxon>
        <taxon>Gammaproteobacteria</taxon>
        <taxon>Enterobacterales</taxon>
        <taxon>Bruguierivoracaceae</taxon>
        <taxon>Sodalis</taxon>
    </lineage>
</organism>
<comment type="function">
    <text evidence="1">One of the primary rRNA binding proteins, it binds specifically to the 5'-end of 16S ribosomal RNA.</text>
</comment>
<comment type="subunit">
    <text evidence="1">Part of the 30S ribosomal subunit.</text>
</comment>
<comment type="similarity">
    <text evidence="1">Belongs to the universal ribosomal protein uS17 family.</text>
</comment>
<dbReference type="EMBL" id="AP008232">
    <property type="protein sequence ID" value="BAE75544.1"/>
    <property type="molecule type" value="Genomic_DNA"/>
</dbReference>
<dbReference type="RefSeq" id="WP_011412079.1">
    <property type="nucleotide sequence ID" value="NC_007712.1"/>
</dbReference>
<dbReference type="SMR" id="Q2NQN1"/>
<dbReference type="STRING" id="343509.SG2269"/>
<dbReference type="KEGG" id="sgl:SG2269"/>
<dbReference type="eggNOG" id="COG0186">
    <property type="taxonomic scope" value="Bacteria"/>
</dbReference>
<dbReference type="HOGENOM" id="CLU_073626_1_1_6"/>
<dbReference type="OrthoDB" id="9811714at2"/>
<dbReference type="BioCyc" id="SGLO343509:SGP1_RS20795-MONOMER"/>
<dbReference type="Proteomes" id="UP000001932">
    <property type="component" value="Chromosome"/>
</dbReference>
<dbReference type="GO" id="GO:0022627">
    <property type="term" value="C:cytosolic small ribosomal subunit"/>
    <property type="evidence" value="ECO:0007669"/>
    <property type="project" value="TreeGrafter"/>
</dbReference>
<dbReference type="GO" id="GO:0019843">
    <property type="term" value="F:rRNA binding"/>
    <property type="evidence" value="ECO:0007669"/>
    <property type="project" value="UniProtKB-UniRule"/>
</dbReference>
<dbReference type="GO" id="GO:0003735">
    <property type="term" value="F:structural constituent of ribosome"/>
    <property type="evidence" value="ECO:0007669"/>
    <property type="project" value="InterPro"/>
</dbReference>
<dbReference type="GO" id="GO:0006412">
    <property type="term" value="P:translation"/>
    <property type="evidence" value="ECO:0007669"/>
    <property type="project" value="UniProtKB-UniRule"/>
</dbReference>
<dbReference type="CDD" id="cd00364">
    <property type="entry name" value="Ribosomal_uS17"/>
    <property type="match status" value="1"/>
</dbReference>
<dbReference type="FunFam" id="2.40.50.140:FF:000014">
    <property type="entry name" value="30S ribosomal protein S17"/>
    <property type="match status" value="1"/>
</dbReference>
<dbReference type="Gene3D" id="2.40.50.140">
    <property type="entry name" value="Nucleic acid-binding proteins"/>
    <property type="match status" value="1"/>
</dbReference>
<dbReference type="HAMAP" id="MF_01345_B">
    <property type="entry name" value="Ribosomal_uS17_B"/>
    <property type="match status" value="1"/>
</dbReference>
<dbReference type="InterPro" id="IPR012340">
    <property type="entry name" value="NA-bd_OB-fold"/>
</dbReference>
<dbReference type="InterPro" id="IPR000266">
    <property type="entry name" value="Ribosomal_uS17"/>
</dbReference>
<dbReference type="InterPro" id="IPR019984">
    <property type="entry name" value="Ribosomal_uS17_bact/chlr"/>
</dbReference>
<dbReference type="InterPro" id="IPR019979">
    <property type="entry name" value="Ribosomal_uS17_CS"/>
</dbReference>
<dbReference type="NCBIfam" id="NF004123">
    <property type="entry name" value="PRK05610.1"/>
    <property type="match status" value="1"/>
</dbReference>
<dbReference type="NCBIfam" id="TIGR03635">
    <property type="entry name" value="uS17_bact"/>
    <property type="match status" value="1"/>
</dbReference>
<dbReference type="PANTHER" id="PTHR10744">
    <property type="entry name" value="40S RIBOSOMAL PROTEIN S11 FAMILY MEMBER"/>
    <property type="match status" value="1"/>
</dbReference>
<dbReference type="PANTHER" id="PTHR10744:SF1">
    <property type="entry name" value="SMALL RIBOSOMAL SUBUNIT PROTEIN US17M"/>
    <property type="match status" value="1"/>
</dbReference>
<dbReference type="Pfam" id="PF00366">
    <property type="entry name" value="Ribosomal_S17"/>
    <property type="match status" value="1"/>
</dbReference>
<dbReference type="PRINTS" id="PR00973">
    <property type="entry name" value="RIBOSOMALS17"/>
</dbReference>
<dbReference type="SUPFAM" id="SSF50249">
    <property type="entry name" value="Nucleic acid-binding proteins"/>
    <property type="match status" value="1"/>
</dbReference>
<dbReference type="PROSITE" id="PS00056">
    <property type="entry name" value="RIBOSOMAL_S17"/>
    <property type="match status" value="1"/>
</dbReference>
<evidence type="ECO:0000255" key="1">
    <source>
        <dbReference type="HAMAP-Rule" id="MF_01345"/>
    </source>
</evidence>
<evidence type="ECO:0000305" key="2"/>
<reference key="1">
    <citation type="journal article" date="2006" name="Genome Res.">
        <title>Massive genome erosion and functional adaptations provide insights into the symbiotic lifestyle of Sodalis glossinidius in the tsetse host.</title>
        <authorList>
            <person name="Toh H."/>
            <person name="Weiss B.L."/>
            <person name="Perkin S.A.H."/>
            <person name="Yamashita A."/>
            <person name="Oshima K."/>
            <person name="Hattori M."/>
            <person name="Aksoy S."/>
        </authorList>
    </citation>
    <scope>NUCLEOTIDE SEQUENCE [LARGE SCALE GENOMIC DNA]</scope>
    <source>
        <strain>morsitans</strain>
    </source>
</reference>